<name>YPDB_ECOLI</name>
<keyword id="KW-0963">Cytoplasm</keyword>
<keyword id="KW-0238">DNA-binding</keyword>
<keyword id="KW-0597">Phosphoprotein</keyword>
<keyword id="KW-1185">Reference proteome</keyword>
<keyword id="KW-0804">Transcription</keyword>
<keyword id="KW-0805">Transcription regulation</keyword>
<keyword id="KW-0902">Two-component regulatory system</keyword>
<feature type="chain" id="PRO_0000081381" description="Transcriptional regulatory protein YpdB">
    <location>
        <begin position="1"/>
        <end position="244"/>
    </location>
</feature>
<feature type="domain" description="Response regulatory" evidence="3">
    <location>
        <begin position="2"/>
        <end position="116"/>
    </location>
</feature>
<feature type="domain" description="HTH LytTR-type" evidence="2">
    <location>
        <begin position="139"/>
        <end position="244"/>
    </location>
</feature>
<feature type="modified residue" description="4-aspartylphosphate" evidence="3">
    <location>
        <position position="53"/>
    </location>
</feature>
<feature type="mutagenesis site" description="Strong induction of yhjX." evidence="4">
    <original>D</original>
    <variation>E</variation>
    <location>
        <position position="53"/>
    </location>
</feature>
<feature type="mutagenesis site" description="Prevents yhjX induction." evidence="4">
    <original>D</original>
    <variation>N</variation>
    <location>
        <position position="53"/>
    </location>
</feature>
<protein>
    <recommendedName>
        <fullName evidence="6">Transcriptional regulatory protein YpdB</fullName>
    </recommendedName>
</protein>
<dbReference type="EMBL" id="U00096">
    <property type="protein sequence ID" value="AAC75440.1"/>
    <property type="molecule type" value="Genomic_DNA"/>
</dbReference>
<dbReference type="EMBL" id="AP009048">
    <property type="protein sequence ID" value="BAA16251.1"/>
    <property type="molecule type" value="Genomic_DNA"/>
</dbReference>
<dbReference type="PIR" id="B65012">
    <property type="entry name" value="B65012"/>
</dbReference>
<dbReference type="RefSeq" id="NP_416882.1">
    <property type="nucleotide sequence ID" value="NC_000913.3"/>
</dbReference>
<dbReference type="RefSeq" id="WP_001295458.1">
    <property type="nucleotide sequence ID" value="NZ_STEB01000008.1"/>
</dbReference>
<dbReference type="SMR" id="P0AE39"/>
<dbReference type="BioGRID" id="4260560">
    <property type="interactions" value="23"/>
</dbReference>
<dbReference type="DIP" id="DIP-48228N"/>
<dbReference type="FunCoup" id="P0AE39">
    <property type="interactions" value="163"/>
</dbReference>
<dbReference type="IntAct" id="P0AE39">
    <property type="interactions" value="2"/>
</dbReference>
<dbReference type="STRING" id="511145.b2381"/>
<dbReference type="jPOST" id="P0AE39"/>
<dbReference type="PaxDb" id="511145-b2381"/>
<dbReference type="EnsemblBacteria" id="AAC75440">
    <property type="protein sequence ID" value="AAC75440"/>
    <property type="gene ID" value="b2381"/>
</dbReference>
<dbReference type="GeneID" id="93774747"/>
<dbReference type="GeneID" id="947395"/>
<dbReference type="KEGG" id="ecj:JW2378"/>
<dbReference type="KEGG" id="eco:b2381"/>
<dbReference type="KEGG" id="ecoc:C3026_13240"/>
<dbReference type="PATRIC" id="fig|1411691.4.peg.4347"/>
<dbReference type="EchoBASE" id="EB3901"/>
<dbReference type="eggNOG" id="COG3279">
    <property type="taxonomic scope" value="Bacteria"/>
</dbReference>
<dbReference type="HOGENOM" id="CLU_000445_14_1_6"/>
<dbReference type="InParanoid" id="P0AE39"/>
<dbReference type="OMA" id="HEDFAVQ"/>
<dbReference type="OrthoDB" id="236568at2"/>
<dbReference type="PhylomeDB" id="P0AE39"/>
<dbReference type="BioCyc" id="EcoCyc:G7244-MONOMER"/>
<dbReference type="PRO" id="PR:P0AE39"/>
<dbReference type="Proteomes" id="UP000000625">
    <property type="component" value="Chromosome"/>
</dbReference>
<dbReference type="GO" id="GO:0005829">
    <property type="term" value="C:cytosol"/>
    <property type="evidence" value="ECO:0000318"/>
    <property type="project" value="GO_Central"/>
</dbReference>
<dbReference type="GO" id="GO:0032993">
    <property type="term" value="C:protein-DNA complex"/>
    <property type="evidence" value="ECO:0000318"/>
    <property type="project" value="GO_Central"/>
</dbReference>
<dbReference type="GO" id="GO:0000156">
    <property type="term" value="F:phosphorelay response regulator activity"/>
    <property type="evidence" value="ECO:0000318"/>
    <property type="project" value="GO_Central"/>
</dbReference>
<dbReference type="GO" id="GO:0000976">
    <property type="term" value="F:transcription cis-regulatory region binding"/>
    <property type="evidence" value="ECO:0000318"/>
    <property type="project" value="GO_Central"/>
</dbReference>
<dbReference type="GO" id="GO:0048870">
    <property type="term" value="P:cell motility"/>
    <property type="evidence" value="ECO:0000269"/>
    <property type="project" value="EcoCyc"/>
</dbReference>
<dbReference type="GO" id="GO:1900192">
    <property type="term" value="P:positive regulation of single-species biofilm formation"/>
    <property type="evidence" value="ECO:0000269"/>
    <property type="project" value="EcoCyc"/>
</dbReference>
<dbReference type="GO" id="GO:0006355">
    <property type="term" value="P:regulation of DNA-templated transcription"/>
    <property type="evidence" value="ECO:0000318"/>
    <property type="project" value="GO_Central"/>
</dbReference>
<dbReference type="GO" id="GO:0046677">
    <property type="term" value="P:response to antibiotic"/>
    <property type="evidence" value="ECO:0000269"/>
    <property type="project" value="EcoCyc"/>
</dbReference>
<dbReference type="CDD" id="cd17532">
    <property type="entry name" value="REC_LytTR_AlgR-like"/>
    <property type="match status" value="1"/>
</dbReference>
<dbReference type="FunFam" id="2.20.25.10:FF:000010">
    <property type="entry name" value="Two-component system response regulator"/>
    <property type="match status" value="1"/>
</dbReference>
<dbReference type="FunFam" id="2.40.50.40:FF:000013">
    <property type="entry name" value="Two-component system response regulator"/>
    <property type="match status" value="1"/>
</dbReference>
<dbReference type="FunFam" id="3.40.50.2300:FF:000104">
    <property type="entry name" value="Two-component system response regulator"/>
    <property type="match status" value="1"/>
</dbReference>
<dbReference type="Gene3D" id="2.20.25.10">
    <property type="match status" value="1"/>
</dbReference>
<dbReference type="Gene3D" id="2.40.50.40">
    <property type="match status" value="1"/>
</dbReference>
<dbReference type="Gene3D" id="3.40.50.2300">
    <property type="match status" value="1"/>
</dbReference>
<dbReference type="InterPro" id="IPR011006">
    <property type="entry name" value="CheY-like_superfamily"/>
</dbReference>
<dbReference type="InterPro" id="IPR046947">
    <property type="entry name" value="LytR-like"/>
</dbReference>
<dbReference type="InterPro" id="IPR007492">
    <property type="entry name" value="LytTR_DNA-bd_dom"/>
</dbReference>
<dbReference type="InterPro" id="IPR001789">
    <property type="entry name" value="Sig_transdc_resp-reg_receiver"/>
</dbReference>
<dbReference type="PANTHER" id="PTHR37299:SF1">
    <property type="entry name" value="STAGE 0 SPORULATION PROTEIN A HOMOLOG"/>
    <property type="match status" value="1"/>
</dbReference>
<dbReference type="PANTHER" id="PTHR37299">
    <property type="entry name" value="TRANSCRIPTIONAL REGULATOR-RELATED"/>
    <property type="match status" value="1"/>
</dbReference>
<dbReference type="Pfam" id="PF04397">
    <property type="entry name" value="LytTR"/>
    <property type="match status" value="1"/>
</dbReference>
<dbReference type="Pfam" id="PF00072">
    <property type="entry name" value="Response_reg"/>
    <property type="match status" value="1"/>
</dbReference>
<dbReference type="SMART" id="SM00850">
    <property type="entry name" value="LytTR"/>
    <property type="match status" value="1"/>
</dbReference>
<dbReference type="SMART" id="SM00448">
    <property type="entry name" value="REC"/>
    <property type="match status" value="1"/>
</dbReference>
<dbReference type="SUPFAM" id="SSF52172">
    <property type="entry name" value="CheY-like"/>
    <property type="match status" value="1"/>
</dbReference>
<dbReference type="PROSITE" id="PS50930">
    <property type="entry name" value="HTH_LYTTR"/>
    <property type="match status" value="1"/>
</dbReference>
<dbReference type="PROSITE" id="PS50110">
    <property type="entry name" value="RESPONSE_REGULATORY"/>
    <property type="match status" value="1"/>
</dbReference>
<organism>
    <name type="scientific">Escherichia coli (strain K12)</name>
    <dbReference type="NCBI Taxonomy" id="83333"/>
    <lineage>
        <taxon>Bacteria</taxon>
        <taxon>Pseudomonadati</taxon>
        <taxon>Pseudomonadota</taxon>
        <taxon>Gammaproteobacteria</taxon>
        <taxon>Enterobacterales</taxon>
        <taxon>Enterobacteriaceae</taxon>
        <taxon>Escherichia</taxon>
    </lineage>
</organism>
<evidence type="ECO:0000250" key="1"/>
<evidence type="ECO:0000255" key="2">
    <source>
        <dbReference type="PROSITE-ProRule" id="PRU00112"/>
    </source>
</evidence>
<evidence type="ECO:0000255" key="3">
    <source>
        <dbReference type="PROSITE-ProRule" id="PRU00169"/>
    </source>
</evidence>
<evidence type="ECO:0000269" key="4">
    <source>
    </source>
</evidence>
<evidence type="ECO:0000269" key="5">
    <source>
    </source>
</evidence>
<evidence type="ECO:0000305" key="6"/>
<proteinExistence type="evidence at protein level"/>
<gene>
    <name type="primary">ypdB</name>
    <name type="ordered locus">b2381</name>
    <name type="ordered locus">JW2378</name>
</gene>
<comment type="function">
    <text evidence="4 5">Member of the two-component regulatory system YpdA/YpdB, which is part of a nutrient-sensing regulatory network composed of YpdA/YpdB, the high-affinity pyruvate signaling system BtsS/BtsR and their respective target proteins, YhjX and BtsT. YpdB regulates expression of yhjX by binding to its promoter region. Activation of the YpdA/YpdB signaling cascade also promotes BtsS/BtsR-mediated btsT expression.</text>
</comment>
<comment type="subcellular location">
    <subcellularLocation>
        <location evidence="1">Cytoplasm</location>
    </subcellularLocation>
</comment>
<comment type="PTM">
    <text evidence="1">Phosphorylated by YpdA.</text>
</comment>
<accession>P0AE39</accession>
<accession>P77742</accession>
<reference key="1">
    <citation type="journal article" date="1997" name="DNA Res.">
        <title>Construction of a contiguous 874-kb sequence of the Escherichia coli-K12 genome corresponding to 50.0-68.8 min on the linkage map and analysis of its sequence features.</title>
        <authorList>
            <person name="Yamamoto Y."/>
            <person name="Aiba H."/>
            <person name="Baba T."/>
            <person name="Hayashi K."/>
            <person name="Inada T."/>
            <person name="Isono K."/>
            <person name="Itoh T."/>
            <person name="Kimura S."/>
            <person name="Kitagawa M."/>
            <person name="Makino K."/>
            <person name="Miki T."/>
            <person name="Mitsuhashi N."/>
            <person name="Mizobuchi K."/>
            <person name="Mori H."/>
            <person name="Nakade S."/>
            <person name="Nakamura Y."/>
            <person name="Nashimoto H."/>
            <person name="Oshima T."/>
            <person name="Oyama S."/>
            <person name="Saito N."/>
            <person name="Sampei G."/>
            <person name="Satoh Y."/>
            <person name="Sivasundaram S."/>
            <person name="Tagami H."/>
            <person name="Takahashi H."/>
            <person name="Takeda J."/>
            <person name="Takemoto K."/>
            <person name="Uehara K."/>
            <person name="Wada C."/>
            <person name="Yamagata S."/>
            <person name="Horiuchi T."/>
        </authorList>
    </citation>
    <scope>NUCLEOTIDE SEQUENCE [LARGE SCALE GENOMIC DNA]</scope>
    <source>
        <strain>K12 / W3110 / ATCC 27325 / DSM 5911</strain>
    </source>
</reference>
<reference key="2">
    <citation type="journal article" date="1997" name="Science">
        <title>The complete genome sequence of Escherichia coli K-12.</title>
        <authorList>
            <person name="Blattner F.R."/>
            <person name="Plunkett G. III"/>
            <person name="Bloch C.A."/>
            <person name="Perna N.T."/>
            <person name="Burland V."/>
            <person name="Riley M."/>
            <person name="Collado-Vides J."/>
            <person name="Glasner J.D."/>
            <person name="Rode C.K."/>
            <person name="Mayhew G.F."/>
            <person name="Gregor J."/>
            <person name="Davis N.W."/>
            <person name="Kirkpatrick H.A."/>
            <person name="Goeden M.A."/>
            <person name="Rose D.J."/>
            <person name="Mau B."/>
            <person name="Shao Y."/>
        </authorList>
    </citation>
    <scope>NUCLEOTIDE SEQUENCE [LARGE SCALE GENOMIC DNA]</scope>
    <source>
        <strain>K12 / MG1655 / ATCC 47076</strain>
    </source>
</reference>
<reference key="3">
    <citation type="journal article" date="2006" name="Mol. Syst. Biol.">
        <title>Highly accurate genome sequences of Escherichia coli K-12 strains MG1655 and W3110.</title>
        <authorList>
            <person name="Hayashi K."/>
            <person name="Morooka N."/>
            <person name="Yamamoto Y."/>
            <person name="Fujita K."/>
            <person name="Isono K."/>
            <person name="Choi S."/>
            <person name="Ohtsubo E."/>
            <person name="Baba T."/>
            <person name="Wanner B.L."/>
            <person name="Mori H."/>
            <person name="Horiuchi T."/>
        </authorList>
    </citation>
    <scope>NUCLEOTIDE SEQUENCE [LARGE SCALE GENOMIC DNA]</scope>
    <source>
        <strain>K12 / W3110 / ATCC 27325 / DSM 5911</strain>
    </source>
</reference>
<reference key="4">
    <citation type="journal article" date="2013" name="J. Bacteriol.">
        <title>Identification of a target gene and activating stimulus for the YpdA/YpdB histidine kinase/response regulator system in Escherichia coli.</title>
        <authorList>
            <person name="Fried L."/>
            <person name="Behr S."/>
            <person name="Jung K."/>
        </authorList>
    </citation>
    <scope>FUNCTION</scope>
    <scope>DNA-BINDING</scope>
    <scope>MUTAGENESIS OF ASP-53</scope>
    <source>
        <strain>K12 / MG1655 / ATCC 47076</strain>
    </source>
</reference>
<reference key="5">
    <citation type="journal article" date="2014" name="J. Bacteriol.">
        <title>Identification of a novel nutrient-sensing histidine kinase/response regulator network in Escherichia coli.</title>
        <authorList>
            <person name="Behr S."/>
            <person name="Fried L."/>
            <person name="Jung K."/>
        </authorList>
    </citation>
    <scope>FUNCTION</scope>
    <source>
        <strain>K12 / MG1655 / ATCC 47076</strain>
    </source>
</reference>
<sequence>MKVIIVEDEFLAQQELSWLIKEHSQMEIVGTFDDGLDVLKFLQHNRVDAIFLDINIPSLDGVLLAQNISQFAHKPFIVFITAWKEHAVEAFELEAFDYILKPYQESRITGMLQKLEAAWQQQQTSSTPAATVTRENDTINLVKDERIIVTPINDIYYAEAHEKMTFVYTRRESYVMPMNITEFCSKLPPSHFFRCHRSFCVNLNKIREIEPWFNNTYILRLKDLDFEVPVSRSKVKEFRQLMHL</sequence>